<evidence type="ECO:0000255" key="1">
    <source>
        <dbReference type="HAMAP-Rule" id="MF_00736"/>
    </source>
</evidence>
<evidence type="ECO:0000305" key="2"/>
<comment type="function">
    <text evidence="1">Forms part of the ribosomal stalk which helps the ribosome interact with GTP-bound translation factors.</text>
</comment>
<comment type="subunit">
    <text evidence="1">Part of the ribosomal stalk of the 50S ribosomal subunit. Interacts with L10 and the large rRNA to form the base of the stalk. L10 forms an elongated spine to which L12 dimers bind in a sequential fashion forming a multimeric L10(L12)X complex.</text>
</comment>
<comment type="PTM">
    <text evidence="1">One or more lysine residues are methylated.</text>
</comment>
<comment type="similarity">
    <text evidence="1">Belongs to the universal ribosomal protein uL11 family.</text>
</comment>
<reference key="1">
    <citation type="journal article" date="2011" name="J. Bacteriol.">
        <title>Genome sequence of Thermotoga sp. strain RQ2, a hyperthermophilic bacterium isolated from a geothermally heated region of the seafloor near Ribeira Quente, the Azores.</title>
        <authorList>
            <person name="Swithers K.S."/>
            <person name="DiPippo J.L."/>
            <person name="Bruce D.C."/>
            <person name="Detter C."/>
            <person name="Tapia R."/>
            <person name="Han S."/>
            <person name="Saunders E."/>
            <person name="Goodwin L.A."/>
            <person name="Han J."/>
            <person name="Woyke T."/>
            <person name="Pitluck S."/>
            <person name="Pennacchio L."/>
            <person name="Nolan M."/>
            <person name="Mikhailova N."/>
            <person name="Lykidis A."/>
            <person name="Land M.L."/>
            <person name="Brettin T."/>
            <person name="Stetter K.O."/>
            <person name="Nelson K.E."/>
            <person name="Gogarten J.P."/>
            <person name="Noll K.M."/>
        </authorList>
    </citation>
    <scope>NUCLEOTIDE SEQUENCE [LARGE SCALE GENOMIC DNA]</scope>
    <source>
        <strain>RQ2</strain>
    </source>
</reference>
<name>RL11_THESQ</name>
<gene>
    <name evidence="1" type="primary">rplK</name>
    <name type="ordered locus">TRQ2_0481</name>
</gene>
<sequence>MAKKVAAQIKLQLPAGKATPAPPVGPALGQHGVNIMEFCKRFNAETADKAGMILPVVITVYEDKSFTFIIKTPPASFLLKKAAGIEKGSSEPKRKIVGKVTRKQIEEIAKTKMPDLNANSLEAAMKIIEGTAKSMGIEVVD</sequence>
<keyword id="KW-0488">Methylation</keyword>
<keyword id="KW-0687">Ribonucleoprotein</keyword>
<keyword id="KW-0689">Ribosomal protein</keyword>
<keyword id="KW-0694">RNA-binding</keyword>
<keyword id="KW-0699">rRNA-binding</keyword>
<dbReference type="EMBL" id="CP000969">
    <property type="protein sequence ID" value="ACB08837.1"/>
    <property type="molecule type" value="Genomic_DNA"/>
</dbReference>
<dbReference type="RefSeq" id="WP_004081512.1">
    <property type="nucleotide sequence ID" value="NC_010483.1"/>
</dbReference>
<dbReference type="BMRB" id="B1L939"/>
<dbReference type="SMR" id="B1L939"/>
<dbReference type="KEGG" id="trq:TRQ2_0481"/>
<dbReference type="HOGENOM" id="CLU_074237_2_0_0"/>
<dbReference type="Proteomes" id="UP000001687">
    <property type="component" value="Chromosome"/>
</dbReference>
<dbReference type="GO" id="GO:0022625">
    <property type="term" value="C:cytosolic large ribosomal subunit"/>
    <property type="evidence" value="ECO:0007669"/>
    <property type="project" value="TreeGrafter"/>
</dbReference>
<dbReference type="GO" id="GO:0070180">
    <property type="term" value="F:large ribosomal subunit rRNA binding"/>
    <property type="evidence" value="ECO:0007669"/>
    <property type="project" value="UniProtKB-UniRule"/>
</dbReference>
<dbReference type="GO" id="GO:0003735">
    <property type="term" value="F:structural constituent of ribosome"/>
    <property type="evidence" value="ECO:0007669"/>
    <property type="project" value="InterPro"/>
</dbReference>
<dbReference type="GO" id="GO:0006412">
    <property type="term" value="P:translation"/>
    <property type="evidence" value="ECO:0007669"/>
    <property type="project" value="UniProtKB-UniRule"/>
</dbReference>
<dbReference type="CDD" id="cd00349">
    <property type="entry name" value="Ribosomal_L11"/>
    <property type="match status" value="1"/>
</dbReference>
<dbReference type="FunFam" id="1.10.10.250:FF:000001">
    <property type="entry name" value="50S ribosomal protein L11"/>
    <property type="match status" value="1"/>
</dbReference>
<dbReference type="FunFam" id="3.30.1550.10:FF:000001">
    <property type="entry name" value="50S ribosomal protein L11"/>
    <property type="match status" value="1"/>
</dbReference>
<dbReference type="Gene3D" id="1.10.10.250">
    <property type="entry name" value="Ribosomal protein L11, C-terminal domain"/>
    <property type="match status" value="1"/>
</dbReference>
<dbReference type="Gene3D" id="3.30.1550.10">
    <property type="entry name" value="Ribosomal protein L11/L12, N-terminal domain"/>
    <property type="match status" value="1"/>
</dbReference>
<dbReference type="HAMAP" id="MF_00736">
    <property type="entry name" value="Ribosomal_uL11"/>
    <property type="match status" value="1"/>
</dbReference>
<dbReference type="InterPro" id="IPR000911">
    <property type="entry name" value="Ribosomal_uL11"/>
</dbReference>
<dbReference type="InterPro" id="IPR006519">
    <property type="entry name" value="Ribosomal_uL11_bac-typ"/>
</dbReference>
<dbReference type="InterPro" id="IPR020783">
    <property type="entry name" value="Ribosomal_uL11_C"/>
</dbReference>
<dbReference type="InterPro" id="IPR036769">
    <property type="entry name" value="Ribosomal_uL11_C_sf"/>
</dbReference>
<dbReference type="InterPro" id="IPR020785">
    <property type="entry name" value="Ribosomal_uL11_CS"/>
</dbReference>
<dbReference type="InterPro" id="IPR020784">
    <property type="entry name" value="Ribosomal_uL11_N"/>
</dbReference>
<dbReference type="InterPro" id="IPR036796">
    <property type="entry name" value="Ribosomal_uL11_N_sf"/>
</dbReference>
<dbReference type="NCBIfam" id="TIGR01632">
    <property type="entry name" value="L11_bact"/>
    <property type="match status" value="1"/>
</dbReference>
<dbReference type="PANTHER" id="PTHR11661">
    <property type="entry name" value="60S RIBOSOMAL PROTEIN L12"/>
    <property type="match status" value="1"/>
</dbReference>
<dbReference type="PANTHER" id="PTHR11661:SF1">
    <property type="entry name" value="LARGE RIBOSOMAL SUBUNIT PROTEIN UL11M"/>
    <property type="match status" value="1"/>
</dbReference>
<dbReference type="Pfam" id="PF00298">
    <property type="entry name" value="Ribosomal_L11"/>
    <property type="match status" value="1"/>
</dbReference>
<dbReference type="Pfam" id="PF03946">
    <property type="entry name" value="Ribosomal_L11_N"/>
    <property type="match status" value="1"/>
</dbReference>
<dbReference type="SMART" id="SM00649">
    <property type="entry name" value="RL11"/>
    <property type="match status" value="1"/>
</dbReference>
<dbReference type="SUPFAM" id="SSF54747">
    <property type="entry name" value="Ribosomal L11/L12e N-terminal domain"/>
    <property type="match status" value="1"/>
</dbReference>
<dbReference type="SUPFAM" id="SSF46906">
    <property type="entry name" value="Ribosomal protein L11, C-terminal domain"/>
    <property type="match status" value="1"/>
</dbReference>
<dbReference type="PROSITE" id="PS00359">
    <property type="entry name" value="RIBOSOMAL_L11"/>
    <property type="match status" value="1"/>
</dbReference>
<feature type="chain" id="PRO_1000195740" description="Large ribosomal subunit protein uL11">
    <location>
        <begin position="1"/>
        <end position="141"/>
    </location>
</feature>
<accession>B1L939</accession>
<proteinExistence type="inferred from homology"/>
<organism>
    <name type="scientific">Thermotoga sp. (strain RQ2)</name>
    <dbReference type="NCBI Taxonomy" id="126740"/>
    <lineage>
        <taxon>Bacteria</taxon>
        <taxon>Thermotogati</taxon>
        <taxon>Thermotogota</taxon>
        <taxon>Thermotogae</taxon>
        <taxon>Thermotogales</taxon>
        <taxon>Thermotogaceae</taxon>
        <taxon>Thermotoga</taxon>
    </lineage>
</organism>
<protein>
    <recommendedName>
        <fullName evidence="1">Large ribosomal subunit protein uL11</fullName>
    </recommendedName>
    <alternativeName>
        <fullName evidence="2">50S ribosomal protein L11</fullName>
    </alternativeName>
</protein>